<feature type="chain" id="PRO_1000124096" description="1-deoxy-D-xylulose 5-phosphate reductoisomerase">
    <location>
        <begin position="1"/>
        <end position="388"/>
    </location>
</feature>
<feature type="binding site" evidence="1">
    <location>
        <position position="10"/>
    </location>
    <ligand>
        <name>NADPH</name>
        <dbReference type="ChEBI" id="CHEBI:57783"/>
    </ligand>
</feature>
<feature type="binding site" evidence="1">
    <location>
        <position position="11"/>
    </location>
    <ligand>
        <name>NADPH</name>
        <dbReference type="ChEBI" id="CHEBI:57783"/>
    </ligand>
</feature>
<feature type="binding site" evidence="1">
    <location>
        <position position="12"/>
    </location>
    <ligand>
        <name>NADPH</name>
        <dbReference type="ChEBI" id="CHEBI:57783"/>
    </ligand>
</feature>
<feature type="binding site" evidence="1">
    <location>
        <position position="13"/>
    </location>
    <ligand>
        <name>NADPH</name>
        <dbReference type="ChEBI" id="CHEBI:57783"/>
    </ligand>
</feature>
<feature type="binding site" evidence="1">
    <location>
        <position position="37"/>
    </location>
    <ligand>
        <name>NADPH</name>
        <dbReference type="ChEBI" id="CHEBI:57783"/>
    </ligand>
</feature>
<feature type="binding site" evidence="1">
    <location>
        <position position="38"/>
    </location>
    <ligand>
        <name>NADPH</name>
        <dbReference type="ChEBI" id="CHEBI:57783"/>
    </ligand>
</feature>
<feature type="binding site" evidence="1">
    <location>
        <position position="122"/>
    </location>
    <ligand>
        <name>NADPH</name>
        <dbReference type="ChEBI" id="CHEBI:57783"/>
    </ligand>
</feature>
<feature type="binding site" evidence="1">
    <location>
        <position position="123"/>
    </location>
    <ligand>
        <name>1-deoxy-D-xylulose 5-phosphate</name>
        <dbReference type="ChEBI" id="CHEBI:57792"/>
    </ligand>
</feature>
<feature type="binding site" evidence="1">
    <location>
        <position position="124"/>
    </location>
    <ligand>
        <name>NADPH</name>
        <dbReference type="ChEBI" id="CHEBI:57783"/>
    </ligand>
</feature>
<feature type="binding site" evidence="1">
    <location>
        <position position="148"/>
    </location>
    <ligand>
        <name>Mn(2+)</name>
        <dbReference type="ChEBI" id="CHEBI:29035"/>
    </ligand>
</feature>
<feature type="binding site" evidence="1">
    <location>
        <position position="149"/>
    </location>
    <ligand>
        <name>1-deoxy-D-xylulose 5-phosphate</name>
        <dbReference type="ChEBI" id="CHEBI:57792"/>
    </ligand>
</feature>
<feature type="binding site" evidence="1">
    <location>
        <position position="150"/>
    </location>
    <ligand>
        <name>1-deoxy-D-xylulose 5-phosphate</name>
        <dbReference type="ChEBI" id="CHEBI:57792"/>
    </ligand>
</feature>
<feature type="binding site" evidence="1">
    <location>
        <position position="150"/>
    </location>
    <ligand>
        <name>Mn(2+)</name>
        <dbReference type="ChEBI" id="CHEBI:29035"/>
    </ligand>
</feature>
<feature type="binding site" evidence="1">
    <location>
        <position position="179"/>
    </location>
    <ligand>
        <name>1-deoxy-D-xylulose 5-phosphate</name>
        <dbReference type="ChEBI" id="CHEBI:57792"/>
    </ligand>
</feature>
<feature type="binding site" evidence="1">
    <location>
        <position position="202"/>
    </location>
    <ligand>
        <name>1-deoxy-D-xylulose 5-phosphate</name>
        <dbReference type="ChEBI" id="CHEBI:57792"/>
    </ligand>
</feature>
<feature type="binding site" evidence="1">
    <location>
        <position position="208"/>
    </location>
    <ligand>
        <name>NADPH</name>
        <dbReference type="ChEBI" id="CHEBI:57783"/>
    </ligand>
</feature>
<feature type="binding site" evidence="1">
    <location>
        <position position="215"/>
    </location>
    <ligand>
        <name>1-deoxy-D-xylulose 5-phosphate</name>
        <dbReference type="ChEBI" id="CHEBI:57792"/>
    </ligand>
</feature>
<feature type="binding site" evidence="1">
    <location>
        <position position="220"/>
    </location>
    <ligand>
        <name>1-deoxy-D-xylulose 5-phosphate</name>
        <dbReference type="ChEBI" id="CHEBI:57792"/>
    </ligand>
</feature>
<feature type="binding site" evidence="1">
    <location>
        <position position="221"/>
    </location>
    <ligand>
        <name>1-deoxy-D-xylulose 5-phosphate</name>
        <dbReference type="ChEBI" id="CHEBI:57792"/>
    </ligand>
</feature>
<feature type="binding site" evidence="1">
    <location>
        <position position="224"/>
    </location>
    <ligand>
        <name>1-deoxy-D-xylulose 5-phosphate</name>
        <dbReference type="ChEBI" id="CHEBI:57792"/>
    </ligand>
</feature>
<feature type="binding site" evidence="1">
    <location>
        <position position="224"/>
    </location>
    <ligand>
        <name>Mn(2+)</name>
        <dbReference type="ChEBI" id="CHEBI:29035"/>
    </ligand>
</feature>
<gene>
    <name evidence="1" type="primary">dxr</name>
    <name type="ordered locus">LHK_02068</name>
</gene>
<sequence>MQRITVLGATGTIGVNTLDVIARHPERFSVFALTGHRQVDRLAGQCRQFRPQVAVVADAAAAGELARQLSGMNVEILHGEAALVAVAASGSVDAVMSAIVGAAGLAPTMAAVRAGKQVYLANKESLVVAGRLMMEAVAASGSRLLPIDSEHNAIFQSLPADFSGDLDASGVERIVLTASGGPFRGWSAQQLAHVTPEQAVAHPNWVMGRKISVDSASLMNKGLEVIEARWLFNAPPGRIEVIVHPQSVIHSMVRYRDGSVVAQLGVPDMRTPIAHALAWPERMDAGVPALDFSLLGGLTFEKPDQEHFPCLGLAFDALREGGDQPAVLNAANEVAVAAFLEKRLAFMDIPRLVQKAMHQFAGRVSNSIEELLELDAEVRRHLLCSLAN</sequence>
<dbReference type="EC" id="1.1.1.267" evidence="1"/>
<dbReference type="EMBL" id="CP001154">
    <property type="protein sequence ID" value="ACO75052.1"/>
    <property type="molecule type" value="Genomic_DNA"/>
</dbReference>
<dbReference type="SMR" id="C1D9F0"/>
<dbReference type="STRING" id="557598.LHK_02068"/>
<dbReference type="KEGG" id="lhk:LHK_02068"/>
<dbReference type="eggNOG" id="COG0743">
    <property type="taxonomic scope" value="Bacteria"/>
</dbReference>
<dbReference type="HOGENOM" id="CLU_035714_4_0_4"/>
<dbReference type="UniPathway" id="UPA00056">
    <property type="reaction ID" value="UER00092"/>
</dbReference>
<dbReference type="Proteomes" id="UP000002010">
    <property type="component" value="Chromosome"/>
</dbReference>
<dbReference type="GO" id="GO:0030604">
    <property type="term" value="F:1-deoxy-D-xylulose-5-phosphate reductoisomerase activity"/>
    <property type="evidence" value="ECO:0007669"/>
    <property type="project" value="UniProtKB-UniRule"/>
</dbReference>
<dbReference type="GO" id="GO:0030145">
    <property type="term" value="F:manganese ion binding"/>
    <property type="evidence" value="ECO:0007669"/>
    <property type="project" value="TreeGrafter"/>
</dbReference>
<dbReference type="GO" id="GO:0070402">
    <property type="term" value="F:NADPH binding"/>
    <property type="evidence" value="ECO:0007669"/>
    <property type="project" value="InterPro"/>
</dbReference>
<dbReference type="GO" id="GO:0051484">
    <property type="term" value="P:isopentenyl diphosphate biosynthetic process, methylerythritol 4-phosphate pathway involved in terpenoid biosynthetic process"/>
    <property type="evidence" value="ECO:0007669"/>
    <property type="project" value="TreeGrafter"/>
</dbReference>
<dbReference type="FunFam" id="3.40.50.720:FF:000045">
    <property type="entry name" value="1-deoxy-D-xylulose 5-phosphate reductoisomerase"/>
    <property type="match status" value="1"/>
</dbReference>
<dbReference type="Gene3D" id="1.10.1740.10">
    <property type="match status" value="1"/>
</dbReference>
<dbReference type="Gene3D" id="3.40.50.720">
    <property type="entry name" value="NAD(P)-binding Rossmann-like Domain"/>
    <property type="match status" value="1"/>
</dbReference>
<dbReference type="HAMAP" id="MF_00183">
    <property type="entry name" value="DXP_reductoisom"/>
    <property type="match status" value="1"/>
</dbReference>
<dbReference type="InterPro" id="IPR003821">
    <property type="entry name" value="DXP_reductoisomerase"/>
</dbReference>
<dbReference type="InterPro" id="IPR013644">
    <property type="entry name" value="DXP_reductoisomerase_C"/>
</dbReference>
<dbReference type="InterPro" id="IPR013512">
    <property type="entry name" value="DXP_reductoisomerase_N"/>
</dbReference>
<dbReference type="InterPro" id="IPR026877">
    <property type="entry name" value="DXPR_C"/>
</dbReference>
<dbReference type="InterPro" id="IPR036169">
    <property type="entry name" value="DXPR_C_sf"/>
</dbReference>
<dbReference type="InterPro" id="IPR036291">
    <property type="entry name" value="NAD(P)-bd_dom_sf"/>
</dbReference>
<dbReference type="NCBIfam" id="TIGR00243">
    <property type="entry name" value="Dxr"/>
    <property type="match status" value="1"/>
</dbReference>
<dbReference type="NCBIfam" id="NF003938">
    <property type="entry name" value="PRK05447.1-1"/>
    <property type="match status" value="1"/>
</dbReference>
<dbReference type="NCBIfam" id="NF009114">
    <property type="entry name" value="PRK12464.1"/>
    <property type="match status" value="1"/>
</dbReference>
<dbReference type="PANTHER" id="PTHR30525">
    <property type="entry name" value="1-DEOXY-D-XYLULOSE 5-PHOSPHATE REDUCTOISOMERASE"/>
    <property type="match status" value="1"/>
</dbReference>
<dbReference type="PANTHER" id="PTHR30525:SF0">
    <property type="entry name" value="1-DEOXY-D-XYLULOSE 5-PHOSPHATE REDUCTOISOMERASE, CHLOROPLASTIC"/>
    <property type="match status" value="1"/>
</dbReference>
<dbReference type="Pfam" id="PF08436">
    <property type="entry name" value="DXP_redisom_C"/>
    <property type="match status" value="1"/>
</dbReference>
<dbReference type="Pfam" id="PF02670">
    <property type="entry name" value="DXP_reductoisom"/>
    <property type="match status" value="1"/>
</dbReference>
<dbReference type="Pfam" id="PF13288">
    <property type="entry name" value="DXPR_C"/>
    <property type="match status" value="1"/>
</dbReference>
<dbReference type="PIRSF" id="PIRSF006205">
    <property type="entry name" value="Dxp_reductismrs"/>
    <property type="match status" value="1"/>
</dbReference>
<dbReference type="SUPFAM" id="SSF69055">
    <property type="entry name" value="1-deoxy-D-xylulose-5-phosphate reductoisomerase, C-terminal domain"/>
    <property type="match status" value="1"/>
</dbReference>
<dbReference type="SUPFAM" id="SSF55347">
    <property type="entry name" value="Glyceraldehyde-3-phosphate dehydrogenase-like, C-terminal domain"/>
    <property type="match status" value="1"/>
</dbReference>
<dbReference type="SUPFAM" id="SSF51735">
    <property type="entry name" value="NAD(P)-binding Rossmann-fold domains"/>
    <property type="match status" value="1"/>
</dbReference>
<evidence type="ECO:0000255" key="1">
    <source>
        <dbReference type="HAMAP-Rule" id="MF_00183"/>
    </source>
</evidence>
<name>DXR_LARHH</name>
<accession>C1D9F0</accession>
<organism>
    <name type="scientific">Laribacter hongkongensis (strain HLHK9)</name>
    <dbReference type="NCBI Taxonomy" id="557598"/>
    <lineage>
        <taxon>Bacteria</taxon>
        <taxon>Pseudomonadati</taxon>
        <taxon>Pseudomonadota</taxon>
        <taxon>Betaproteobacteria</taxon>
        <taxon>Neisseriales</taxon>
        <taxon>Aquaspirillaceae</taxon>
        <taxon>Laribacter</taxon>
    </lineage>
</organism>
<proteinExistence type="inferred from homology"/>
<keyword id="KW-0414">Isoprene biosynthesis</keyword>
<keyword id="KW-0464">Manganese</keyword>
<keyword id="KW-0479">Metal-binding</keyword>
<keyword id="KW-0521">NADP</keyword>
<keyword id="KW-0560">Oxidoreductase</keyword>
<keyword id="KW-1185">Reference proteome</keyword>
<comment type="function">
    <text evidence="1">Catalyzes the NADPH-dependent rearrangement and reduction of 1-deoxy-D-xylulose-5-phosphate (DXP) to 2-C-methyl-D-erythritol 4-phosphate (MEP).</text>
</comment>
<comment type="catalytic activity">
    <reaction evidence="1">
        <text>2-C-methyl-D-erythritol 4-phosphate + NADP(+) = 1-deoxy-D-xylulose 5-phosphate + NADPH + H(+)</text>
        <dbReference type="Rhea" id="RHEA:13717"/>
        <dbReference type="ChEBI" id="CHEBI:15378"/>
        <dbReference type="ChEBI" id="CHEBI:57783"/>
        <dbReference type="ChEBI" id="CHEBI:57792"/>
        <dbReference type="ChEBI" id="CHEBI:58262"/>
        <dbReference type="ChEBI" id="CHEBI:58349"/>
        <dbReference type="EC" id="1.1.1.267"/>
    </reaction>
    <physiologicalReaction direction="right-to-left" evidence="1">
        <dbReference type="Rhea" id="RHEA:13719"/>
    </physiologicalReaction>
</comment>
<comment type="cofactor">
    <cofactor evidence="1">
        <name>Mg(2+)</name>
        <dbReference type="ChEBI" id="CHEBI:18420"/>
    </cofactor>
    <cofactor evidence="1">
        <name>Mn(2+)</name>
        <dbReference type="ChEBI" id="CHEBI:29035"/>
    </cofactor>
</comment>
<comment type="pathway">
    <text evidence="1">Isoprenoid biosynthesis; isopentenyl diphosphate biosynthesis via DXP pathway; isopentenyl diphosphate from 1-deoxy-D-xylulose 5-phosphate: step 1/6.</text>
</comment>
<comment type="similarity">
    <text evidence="1">Belongs to the DXR family.</text>
</comment>
<protein>
    <recommendedName>
        <fullName evidence="1">1-deoxy-D-xylulose 5-phosphate reductoisomerase</fullName>
        <shortName evidence="1">DXP reductoisomerase</shortName>
        <ecNumber evidence="1">1.1.1.267</ecNumber>
    </recommendedName>
    <alternativeName>
        <fullName evidence="1">1-deoxyxylulose-5-phosphate reductoisomerase</fullName>
    </alternativeName>
    <alternativeName>
        <fullName evidence="1">2-C-methyl-D-erythritol 4-phosphate synthase</fullName>
    </alternativeName>
</protein>
<reference key="1">
    <citation type="journal article" date="2009" name="PLoS Genet.">
        <title>The complete genome and proteome of Laribacter hongkongensis reveal potential mechanisms for adaptations to different temperatures and habitats.</title>
        <authorList>
            <person name="Woo P.C.Y."/>
            <person name="Lau S.K.P."/>
            <person name="Tse H."/>
            <person name="Teng J.L.L."/>
            <person name="Curreem S.O."/>
            <person name="Tsang A.K.L."/>
            <person name="Fan R.Y.Y."/>
            <person name="Wong G.K.M."/>
            <person name="Huang Y."/>
            <person name="Loman N.J."/>
            <person name="Snyder L.A.S."/>
            <person name="Cai J.J."/>
            <person name="Huang J.-D."/>
            <person name="Mak W."/>
            <person name="Pallen M.J."/>
            <person name="Lok S."/>
            <person name="Yuen K.-Y."/>
        </authorList>
    </citation>
    <scope>NUCLEOTIDE SEQUENCE [LARGE SCALE GENOMIC DNA]</scope>
    <source>
        <strain>HLHK9</strain>
    </source>
</reference>